<accession>Q0P4W9</accession>
<name>FEZF1_XENTR</name>
<keyword id="KW-0217">Developmental protein</keyword>
<keyword id="KW-0221">Differentiation</keyword>
<keyword id="KW-0238">DNA-binding</keyword>
<keyword id="KW-0479">Metal-binding</keyword>
<keyword id="KW-0524">Neurogenesis</keyword>
<keyword id="KW-0539">Nucleus</keyword>
<keyword id="KW-1185">Reference proteome</keyword>
<keyword id="KW-0677">Repeat</keyword>
<keyword id="KW-0678">Repressor</keyword>
<keyword id="KW-0804">Transcription</keyword>
<keyword id="KW-0805">Transcription regulation</keyword>
<keyword id="KW-0862">Zinc</keyword>
<keyword id="KW-0863">Zinc-finger</keyword>
<protein>
    <recommendedName>
        <fullName>Fez family zinc finger protein 1</fullName>
    </recommendedName>
</protein>
<feature type="chain" id="PRO_0000295118" description="Fez family zinc finger protein 1">
    <location>
        <begin position="1"/>
        <end position="462"/>
    </location>
</feature>
<feature type="zinc finger region" description="C2H2-type 1" evidence="2">
    <location>
        <begin position="260"/>
        <end position="282"/>
    </location>
</feature>
<feature type="zinc finger region" description="C2H2-type 2" evidence="2">
    <location>
        <begin position="288"/>
        <end position="310"/>
    </location>
</feature>
<feature type="zinc finger region" description="C2H2-type 3" evidence="2">
    <location>
        <begin position="316"/>
        <end position="338"/>
    </location>
</feature>
<feature type="zinc finger region" description="C2H2-type 4" evidence="2">
    <location>
        <begin position="344"/>
        <end position="366"/>
    </location>
</feature>
<feature type="zinc finger region" description="C2H2-type 5" evidence="2">
    <location>
        <begin position="372"/>
        <end position="394"/>
    </location>
</feature>
<feature type="zinc finger region" description="C2H2-type 6" evidence="2">
    <location>
        <begin position="400"/>
        <end position="423"/>
    </location>
</feature>
<feature type="region of interest" description="Disordered" evidence="3">
    <location>
        <begin position="441"/>
        <end position="462"/>
    </location>
</feature>
<feature type="short sequence motif" description="Engrailed homology 1 repressor" evidence="1">
    <location>
        <begin position="34"/>
        <end position="49"/>
    </location>
</feature>
<feature type="compositionally biased region" description="Polar residues" evidence="3">
    <location>
        <begin position="448"/>
        <end position="462"/>
    </location>
</feature>
<evidence type="ECO:0000250" key="1"/>
<evidence type="ECO:0000255" key="2">
    <source>
        <dbReference type="PROSITE-ProRule" id="PRU00042"/>
    </source>
</evidence>
<evidence type="ECO:0000256" key="3">
    <source>
        <dbReference type="SAM" id="MobiDB-lite"/>
    </source>
</evidence>
<evidence type="ECO:0000305" key="4"/>
<proteinExistence type="evidence at transcript level"/>
<gene>
    <name type="primary">fezf1</name>
    <name type="synonym">fez</name>
</gene>
<dbReference type="EMBL" id="BC121869">
    <property type="protein sequence ID" value="AAI21870.1"/>
    <property type="molecule type" value="mRNA"/>
</dbReference>
<dbReference type="RefSeq" id="NP_001072463.1">
    <property type="nucleotide sequence ID" value="NM_001078995.1"/>
</dbReference>
<dbReference type="SMR" id="Q0P4W9"/>
<dbReference type="FunCoup" id="Q0P4W9">
    <property type="interactions" value="1183"/>
</dbReference>
<dbReference type="STRING" id="8364.ENSXETP00000051834"/>
<dbReference type="PaxDb" id="8364-ENSXETP00000049215"/>
<dbReference type="DNASU" id="779918"/>
<dbReference type="GeneID" id="779918"/>
<dbReference type="KEGG" id="xtr:779918"/>
<dbReference type="AGR" id="Xenbase:XB-GENE-985988"/>
<dbReference type="CTD" id="389549"/>
<dbReference type="Xenbase" id="XB-GENE-985988">
    <property type="gene designation" value="fezf1"/>
</dbReference>
<dbReference type="eggNOG" id="KOG1721">
    <property type="taxonomic scope" value="Eukaryota"/>
</dbReference>
<dbReference type="HOGENOM" id="CLU_021813_2_1_1"/>
<dbReference type="InParanoid" id="Q0P4W9"/>
<dbReference type="OMA" id="SQIQHYM"/>
<dbReference type="OrthoDB" id="5062908at2759"/>
<dbReference type="PhylomeDB" id="Q0P4W9"/>
<dbReference type="TreeFam" id="TF316780"/>
<dbReference type="Proteomes" id="UP000008143">
    <property type="component" value="Chromosome 3"/>
</dbReference>
<dbReference type="Bgee" id="ENSXETG00000022748">
    <property type="expression patterns" value="Expressed in neurula embryo and 4 other cell types or tissues"/>
</dbReference>
<dbReference type="GO" id="GO:0005634">
    <property type="term" value="C:nucleus"/>
    <property type="evidence" value="ECO:0007669"/>
    <property type="project" value="UniProtKB-SubCell"/>
</dbReference>
<dbReference type="GO" id="GO:0003677">
    <property type="term" value="F:DNA binding"/>
    <property type="evidence" value="ECO:0007669"/>
    <property type="project" value="UniProtKB-KW"/>
</dbReference>
<dbReference type="GO" id="GO:0008270">
    <property type="term" value="F:zinc ion binding"/>
    <property type="evidence" value="ECO:0007669"/>
    <property type="project" value="UniProtKB-KW"/>
</dbReference>
<dbReference type="GO" id="GO:0030154">
    <property type="term" value="P:cell differentiation"/>
    <property type="evidence" value="ECO:0007669"/>
    <property type="project" value="UniProtKB-KW"/>
</dbReference>
<dbReference type="GO" id="GO:0007399">
    <property type="term" value="P:nervous system development"/>
    <property type="evidence" value="ECO:0007669"/>
    <property type="project" value="UniProtKB-KW"/>
</dbReference>
<dbReference type="FunFam" id="3.30.160.60:FF:000103">
    <property type="entry name" value="FEZ family zinc finger 1"/>
    <property type="match status" value="1"/>
</dbReference>
<dbReference type="FunFam" id="3.30.160.60:FF:000251">
    <property type="entry name" value="FEZ family zinc finger 2"/>
    <property type="match status" value="1"/>
</dbReference>
<dbReference type="FunFam" id="3.30.160.60:FF:000227">
    <property type="entry name" value="fez family zinc finger protein 1"/>
    <property type="match status" value="1"/>
</dbReference>
<dbReference type="FunFam" id="3.30.160.60:FF:000164">
    <property type="entry name" value="Fez family zinc finger protein 2"/>
    <property type="match status" value="1"/>
</dbReference>
<dbReference type="FunFam" id="3.30.160.60:FF:000194">
    <property type="entry name" value="Fez family zinc finger protein 2"/>
    <property type="match status" value="1"/>
</dbReference>
<dbReference type="FunFam" id="3.30.160.60:FF:000863">
    <property type="entry name" value="fez family zinc finger protein 2"/>
    <property type="match status" value="1"/>
</dbReference>
<dbReference type="Gene3D" id="3.30.160.60">
    <property type="entry name" value="Classic Zinc Finger"/>
    <property type="match status" value="6"/>
</dbReference>
<dbReference type="InterPro" id="IPR050331">
    <property type="entry name" value="Zinc_finger"/>
</dbReference>
<dbReference type="InterPro" id="IPR036236">
    <property type="entry name" value="Znf_C2H2_sf"/>
</dbReference>
<dbReference type="InterPro" id="IPR013087">
    <property type="entry name" value="Znf_C2H2_type"/>
</dbReference>
<dbReference type="PANTHER" id="PTHR16515:SF35">
    <property type="entry name" value="FEZ FAMILY ZINC FINGER PROTEIN 2"/>
    <property type="match status" value="1"/>
</dbReference>
<dbReference type="PANTHER" id="PTHR16515">
    <property type="entry name" value="PR DOMAIN ZINC FINGER PROTEIN"/>
    <property type="match status" value="1"/>
</dbReference>
<dbReference type="Pfam" id="PF00096">
    <property type="entry name" value="zf-C2H2"/>
    <property type="match status" value="5"/>
</dbReference>
<dbReference type="Pfam" id="PF13912">
    <property type="entry name" value="zf-C2H2_6"/>
    <property type="match status" value="1"/>
</dbReference>
<dbReference type="SMART" id="SM00355">
    <property type="entry name" value="ZnF_C2H2"/>
    <property type="match status" value="6"/>
</dbReference>
<dbReference type="SUPFAM" id="SSF57667">
    <property type="entry name" value="beta-beta-alpha zinc fingers"/>
    <property type="match status" value="3"/>
</dbReference>
<dbReference type="PROSITE" id="PS00028">
    <property type="entry name" value="ZINC_FINGER_C2H2_1"/>
    <property type="match status" value="6"/>
</dbReference>
<dbReference type="PROSITE" id="PS50157">
    <property type="entry name" value="ZINC_FINGER_C2H2_2"/>
    <property type="match status" value="6"/>
</dbReference>
<sequence>MDSSLQHKTTKIFPSQASRDSLSNRVTMISGAKPLAFSIERIMSRTPEPKCLPVPSLLQGSVPKGDQKQALHINSSSIPCMIPFVPVAYDHCPKIGISGAELRKSHLDSSPPFSCNDLLNCALTLKGDFPREALPLQQYKLVRPRVVNHSSFHAMGAAFCYFNRGDSQCHPPASINIHPVASYFLGSPLHQAPKSYLAERNKLVLPSVEKFSSGVTFKDLSQAQFQHYMKEGAHSLSDKITFKTSAKFSSASPSNKPKVFTCEVCGKVFNAHYNLTRHMPVHTGARPFVCKICGKGFRQASTLCRHKIIHTQEKPHKCNQCGKAFNRSSTLNTHTRIHAGYKPFVCEFCGKGFHQKGNYKNHKLTHSGEKQFKCNICNKAFHQIYNLTFHMHTHNDKKPFTCPTCGKGFCRNFDLKKHVRKLHDSNTAAPHAIGGTGQEELLLPNREPSPTIQSPQLQKSGY</sequence>
<comment type="function">
    <text evidence="1">Transcription repressor. Involved in the development of the forebrain region (By similarity).</text>
</comment>
<comment type="subcellular location">
    <subcellularLocation>
        <location evidence="4">Nucleus</location>
    </subcellularLocation>
</comment>
<comment type="similarity">
    <text evidence="4">Belongs to the krueppel C2H2-type zinc-finger protein family.</text>
</comment>
<reference key="1">
    <citation type="submission" date="2006-08" db="EMBL/GenBank/DDBJ databases">
        <authorList>
            <consortium name="NIH - Xenopus Gene Collection (XGC) project"/>
        </authorList>
    </citation>
    <scope>NUCLEOTIDE SEQUENCE [LARGE SCALE MRNA]</scope>
    <source>
        <tissue>Brain</tissue>
    </source>
</reference>
<organism>
    <name type="scientific">Xenopus tropicalis</name>
    <name type="common">Western clawed frog</name>
    <name type="synonym">Silurana tropicalis</name>
    <dbReference type="NCBI Taxonomy" id="8364"/>
    <lineage>
        <taxon>Eukaryota</taxon>
        <taxon>Metazoa</taxon>
        <taxon>Chordata</taxon>
        <taxon>Craniata</taxon>
        <taxon>Vertebrata</taxon>
        <taxon>Euteleostomi</taxon>
        <taxon>Amphibia</taxon>
        <taxon>Batrachia</taxon>
        <taxon>Anura</taxon>
        <taxon>Pipoidea</taxon>
        <taxon>Pipidae</taxon>
        <taxon>Xenopodinae</taxon>
        <taxon>Xenopus</taxon>
        <taxon>Silurana</taxon>
    </lineage>
</organism>